<comment type="function">
    <text evidence="1">Activates KDO (a required 8-carbon sugar) for incorporation into bacterial lipopolysaccharide in Gram-negative bacteria.</text>
</comment>
<comment type="catalytic activity">
    <reaction evidence="1">
        <text>3-deoxy-alpha-D-manno-oct-2-ulosonate + CTP = CMP-3-deoxy-beta-D-manno-octulosonate + diphosphate</text>
        <dbReference type="Rhea" id="RHEA:23448"/>
        <dbReference type="ChEBI" id="CHEBI:33019"/>
        <dbReference type="ChEBI" id="CHEBI:37563"/>
        <dbReference type="ChEBI" id="CHEBI:85986"/>
        <dbReference type="ChEBI" id="CHEBI:85987"/>
        <dbReference type="EC" id="2.7.7.38"/>
    </reaction>
</comment>
<comment type="pathway">
    <text evidence="1">Nucleotide-sugar biosynthesis; CMP-3-deoxy-D-manno-octulosonate biosynthesis; CMP-3-deoxy-D-manno-octulosonate from 3-deoxy-D-manno-octulosonate and CTP: step 1/1.</text>
</comment>
<comment type="pathway">
    <text evidence="1">Bacterial outer membrane biogenesis; lipopolysaccharide biosynthesis.</text>
</comment>
<comment type="subcellular location">
    <subcellularLocation>
        <location evidence="1">Cytoplasm</location>
    </subcellularLocation>
</comment>
<comment type="similarity">
    <text evidence="1">Belongs to the KdsB family.</text>
</comment>
<accession>B3QTV9</accession>
<proteinExistence type="inferred from homology"/>
<dbReference type="EC" id="2.7.7.38" evidence="1"/>
<dbReference type="EMBL" id="CP001100">
    <property type="protein sequence ID" value="ACF14307.1"/>
    <property type="molecule type" value="Genomic_DNA"/>
</dbReference>
<dbReference type="RefSeq" id="WP_012500391.1">
    <property type="nucleotide sequence ID" value="NC_011026.1"/>
</dbReference>
<dbReference type="SMR" id="B3QTV9"/>
<dbReference type="STRING" id="517418.Ctha_1850"/>
<dbReference type="KEGG" id="cts:Ctha_1850"/>
<dbReference type="eggNOG" id="COG1212">
    <property type="taxonomic scope" value="Bacteria"/>
</dbReference>
<dbReference type="HOGENOM" id="CLU_065038_0_1_10"/>
<dbReference type="OrthoDB" id="9815559at2"/>
<dbReference type="UniPathway" id="UPA00030"/>
<dbReference type="UniPathway" id="UPA00358">
    <property type="reaction ID" value="UER00476"/>
</dbReference>
<dbReference type="Proteomes" id="UP000001208">
    <property type="component" value="Chromosome"/>
</dbReference>
<dbReference type="GO" id="GO:0005829">
    <property type="term" value="C:cytosol"/>
    <property type="evidence" value="ECO:0007669"/>
    <property type="project" value="TreeGrafter"/>
</dbReference>
<dbReference type="GO" id="GO:0008690">
    <property type="term" value="F:3-deoxy-manno-octulosonate cytidylyltransferase activity"/>
    <property type="evidence" value="ECO:0007669"/>
    <property type="project" value="UniProtKB-UniRule"/>
</dbReference>
<dbReference type="GO" id="GO:0033468">
    <property type="term" value="P:CMP-keto-3-deoxy-D-manno-octulosonic acid biosynthetic process"/>
    <property type="evidence" value="ECO:0007669"/>
    <property type="project" value="UniProtKB-UniRule"/>
</dbReference>
<dbReference type="GO" id="GO:0009103">
    <property type="term" value="P:lipopolysaccharide biosynthetic process"/>
    <property type="evidence" value="ECO:0007669"/>
    <property type="project" value="UniProtKB-UniRule"/>
</dbReference>
<dbReference type="CDD" id="cd02517">
    <property type="entry name" value="CMP-KDO-Synthetase"/>
    <property type="match status" value="1"/>
</dbReference>
<dbReference type="Gene3D" id="3.90.550.10">
    <property type="entry name" value="Spore Coat Polysaccharide Biosynthesis Protein SpsA, Chain A"/>
    <property type="match status" value="1"/>
</dbReference>
<dbReference type="HAMAP" id="MF_00057">
    <property type="entry name" value="KdsB"/>
    <property type="match status" value="1"/>
</dbReference>
<dbReference type="InterPro" id="IPR003329">
    <property type="entry name" value="Cytidylyl_trans"/>
</dbReference>
<dbReference type="InterPro" id="IPR004528">
    <property type="entry name" value="KdsB"/>
</dbReference>
<dbReference type="InterPro" id="IPR029044">
    <property type="entry name" value="Nucleotide-diphossugar_trans"/>
</dbReference>
<dbReference type="NCBIfam" id="TIGR00466">
    <property type="entry name" value="kdsB"/>
    <property type="match status" value="1"/>
</dbReference>
<dbReference type="NCBIfam" id="NF003950">
    <property type="entry name" value="PRK05450.1-3"/>
    <property type="match status" value="1"/>
</dbReference>
<dbReference type="NCBIfam" id="NF003952">
    <property type="entry name" value="PRK05450.1-5"/>
    <property type="match status" value="1"/>
</dbReference>
<dbReference type="NCBIfam" id="NF009905">
    <property type="entry name" value="PRK13368.1"/>
    <property type="match status" value="1"/>
</dbReference>
<dbReference type="PANTHER" id="PTHR42866">
    <property type="entry name" value="3-DEOXY-MANNO-OCTULOSONATE CYTIDYLYLTRANSFERASE"/>
    <property type="match status" value="1"/>
</dbReference>
<dbReference type="PANTHER" id="PTHR42866:SF2">
    <property type="entry name" value="3-DEOXY-MANNO-OCTULOSONATE CYTIDYLYLTRANSFERASE, MITOCHONDRIAL"/>
    <property type="match status" value="1"/>
</dbReference>
<dbReference type="Pfam" id="PF02348">
    <property type="entry name" value="CTP_transf_3"/>
    <property type="match status" value="1"/>
</dbReference>
<dbReference type="SUPFAM" id="SSF53448">
    <property type="entry name" value="Nucleotide-diphospho-sugar transferases"/>
    <property type="match status" value="1"/>
</dbReference>
<name>KDSB_CHLT3</name>
<organism>
    <name type="scientific">Chloroherpeton thalassium (strain ATCC 35110 / GB-78)</name>
    <dbReference type="NCBI Taxonomy" id="517418"/>
    <lineage>
        <taxon>Bacteria</taxon>
        <taxon>Pseudomonadati</taxon>
        <taxon>Chlorobiota</taxon>
        <taxon>Chlorobiia</taxon>
        <taxon>Chlorobiales</taxon>
        <taxon>Chloroherpetonaceae</taxon>
        <taxon>Chloroherpeton</taxon>
    </lineage>
</organism>
<reference key="1">
    <citation type="submission" date="2008-06" db="EMBL/GenBank/DDBJ databases">
        <title>Complete sequence of Chloroherpeton thalassium ATCC 35110.</title>
        <authorList>
            <consortium name="US DOE Joint Genome Institute"/>
            <person name="Lucas S."/>
            <person name="Copeland A."/>
            <person name="Lapidus A."/>
            <person name="Glavina del Rio T."/>
            <person name="Dalin E."/>
            <person name="Tice H."/>
            <person name="Bruce D."/>
            <person name="Goodwin L."/>
            <person name="Pitluck S."/>
            <person name="Schmutz J."/>
            <person name="Larimer F."/>
            <person name="Land M."/>
            <person name="Hauser L."/>
            <person name="Kyrpides N."/>
            <person name="Mikhailova N."/>
            <person name="Liu Z."/>
            <person name="Li T."/>
            <person name="Zhao F."/>
            <person name="Overmann J."/>
            <person name="Bryant D.A."/>
            <person name="Richardson P."/>
        </authorList>
    </citation>
    <scope>NUCLEOTIDE SEQUENCE [LARGE SCALE GENOMIC DNA]</scope>
    <source>
        <strain>ATCC 35110 / GB-78</strain>
    </source>
</reference>
<sequence length="246" mass="27172">MKAVIVIPARLKSTRLPEKMLVDLDGKPLVVRTYEQAKKSRLASDVLLAVDSKRLLDIAESFGCKAVLTPENLQSGTDRIAFAAKSIDADVVINVQGDEPLIPPEMIDSAILPFIENAALPCATLIQPIVSDVPEILQNPNVVKVVTDKNGYALYFSRSPIPYQRNSDAQPKIFRHIGLYAFRKPALETFTTLPPSMLEETERLEQLRLLENGIRIKCVITNLDSQAVDTADDLAKVKAILAKKLK</sequence>
<evidence type="ECO:0000255" key="1">
    <source>
        <dbReference type="HAMAP-Rule" id="MF_00057"/>
    </source>
</evidence>
<protein>
    <recommendedName>
        <fullName evidence="1">3-deoxy-manno-octulosonate cytidylyltransferase</fullName>
        <ecNumber evidence="1">2.7.7.38</ecNumber>
    </recommendedName>
    <alternativeName>
        <fullName evidence="1">CMP-2-keto-3-deoxyoctulosonic acid synthase</fullName>
        <shortName evidence="1">CKS</shortName>
        <shortName evidence="1">CMP-KDO synthase</shortName>
    </alternativeName>
</protein>
<keyword id="KW-0963">Cytoplasm</keyword>
<keyword id="KW-0448">Lipopolysaccharide biosynthesis</keyword>
<keyword id="KW-0548">Nucleotidyltransferase</keyword>
<keyword id="KW-1185">Reference proteome</keyword>
<keyword id="KW-0808">Transferase</keyword>
<gene>
    <name evidence="1" type="primary">kdsB</name>
    <name type="ordered locus">Ctha_1850</name>
</gene>
<feature type="chain" id="PRO_0000370047" description="3-deoxy-manno-octulosonate cytidylyltransferase">
    <location>
        <begin position="1"/>
        <end position="246"/>
    </location>
</feature>